<organism>
    <name type="scientific">Haemophilus influenzae (strain PittGG)</name>
    <dbReference type="NCBI Taxonomy" id="374931"/>
    <lineage>
        <taxon>Bacteria</taxon>
        <taxon>Pseudomonadati</taxon>
        <taxon>Pseudomonadota</taxon>
        <taxon>Gammaproteobacteria</taxon>
        <taxon>Pasteurellales</taxon>
        <taxon>Pasteurellaceae</taxon>
        <taxon>Haemophilus</taxon>
    </lineage>
</organism>
<evidence type="ECO:0000255" key="1">
    <source>
        <dbReference type="HAMAP-Rule" id="MF_01864"/>
    </source>
</evidence>
<evidence type="ECO:0000255" key="2">
    <source>
        <dbReference type="PROSITE-ProRule" id="PRU01266"/>
    </source>
</evidence>
<sequence length="474" mass="53640">MTQKLHIKTWGCQMNEYDSSKMADLLLSTHGLELTEAPEEADVLLLNTCSIREKAQEKVFHQLGRWKELKKNNPNLVIGVGGCVASQEGEHIRHRAPYVDIIFGPQTLHRLPEMINQIRGGKSSVVDVSFPEIEKFDRLPEPRAEGPTAFVSIMEGCNKYCTFCVVPYTRGEEVSRPVDDVLFEIAQLAEQGVREVNLLGQNVNAYRGPTHDGQICSFAELLRLVASIDGIDRLRFTTSHPIEFTDDIIDVYRDTPELVSFLHLPVQAGSDRVLTMMKRAHTALEYKSIIRKLRAVRPDIQISSDFIVGFPGETAEDFEQTMNLIAQVNFDMSFSFVYSARPGTPAADMPDDVTEDEKKQRLYVLQERINQQAAQFSRRMLGTEQRVLVEGPSKKDIMELTGRTETNRIVNFQGSPEMIGKFVDVKITDVYTNSLRGEVVRTEDEMGLRIAQSPQEVMNRTRKEDELGVGRYHG</sequence>
<proteinExistence type="inferred from homology"/>
<accession>A5UFJ1</accession>
<reference key="1">
    <citation type="journal article" date="2007" name="Genome Biol.">
        <title>Characterization and modeling of the Haemophilus influenzae core and supragenomes based on the complete genomic sequences of Rd and 12 clinical nontypeable strains.</title>
        <authorList>
            <person name="Hogg J.S."/>
            <person name="Hu F.Z."/>
            <person name="Janto B."/>
            <person name="Boissy R."/>
            <person name="Hayes J."/>
            <person name="Keefe R."/>
            <person name="Post J.C."/>
            <person name="Ehrlich G.D."/>
        </authorList>
    </citation>
    <scope>NUCLEOTIDE SEQUENCE [LARGE SCALE GENOMIC DNA]</scope>
    <source>
        <strain>PittGG</strain>
    </source>
</reference>
<dbReference type="EC" id="2.8.4.3" evidence="1"/>
<dbReference type="EMBL" id="CP000672">
    <property type="protein sequence ID" value="ABQ99546.1"/>
    <property type="molecule type" value="Genomic_DNA"/>
</dbReference>
<dbReference type="SMR" id="A5UFJ1"/>
<dbReference type="KEGG" id="hiq:CGSHiGG_02565"/>
<dbReference type="HOGENOM" id="CLU_018697_2_0_6"/>
<dbReference type="Proteomes" id="UP000001990">
    <property type="component" value="Chromosome"/>
</dbReference>
<dbReference type="GO" id="GO:0005829">
    <property type="term" value="C:cytosol"/>
    <property type="evidence" value="ECO:0007669"/>
    <property type="project" value="TreeGrafter"/>
</dbReference>
<dbReference type="GO" id="GO:0051539">
    <property type="term" value="F:4 iron, 4 sulfur cluster binding"/>
    <property type="evidence" value="ECO:0007669"/>
    <property type="project" value="UniProtKB-UniRule"/>
</dbReference>
<dbReference type="GO" id="GO:0046872">
    <property type="term" value="F:metal ion binding"/>
    <property type="evidence" value="ECO:0007669"/>
    <property type="project" value="UniProtKB-KW"/>
</dbReference>
<dbReference type="GO" id="GO:0035597">
    <property type="term" value="F:N6-isopentenyladenosine methylthiotransferase activity"/>
    <property type="evidence" value="ECO:0007669"/>
    <property type="project" value="TreeGrafter"/>
</dbReference>
<dbReference type="CDD" id="cd01335">
    <property type="entry name" value="Radical_SAM"/>
    <property type="match status" value="1"/>
</dbReference>
<dbReference type="FunFam" id="3.40.50.12160:FF:000001">
    <property type="entry name" value="tRNA-2-methylthio-N(6)-dimethylallyladenosine synthase"/>
    <property type="match status" value="1"/>
</dbReference>
<dbReference type="FunFam" id="3.80.30.20:FF:000001">
    <property type="entry name" value="tRNA-2-methylthio-N(6)-dimethylallyladenosine synthase 2"/>
    <property type="match status" value="1"/>
</dbReference>
<dbReference type="Gene3D" id="3.40.50.12160">
    <property type="entry name" value="Methylthiotransferase, N-terminal domain"/>
    <property type="match status" value="1"/>
</dbReference>
<dbReference type="Gene3D" id="3.80.30.20">
    <property type="entry name" value="tm_1862 like domain"/>
    <property type="match status" value="1"/>
</dbReference>
<dbReference type="HAMAP" id="MF_01864">
    <property type="entry name" value="tRNA_metthiotr_MiaB"/>
    <property type="match status" value="1"/>
</dbReference>
<dbReference type="InterPro" id="IPR006638">
    <property type="entry name" value="Elp3/MiaA/NifB-like_rSAM"/>
</dbReference>
<dbReference type="InterPro" id="IPR005839">
    <property type="entry name" value="Methylthiotransferase"/>
</dbReference>
<dbReference type="InterPro" id="IPR020612">
    <property type="entry name" value="Methylthiotransferase_CS"/>
</dbReference>
<dbReference type="InterPro" id="IPR013848">
    <property type="entry name" value="Methylthiotransferase_N"/>
</dbReference>
<dbReference type="InterPro" id="IPR038135">
    <property type="entry name" value="Methylthiotransferase_N_sf"/>
</dbReference>
<dbReference type="InterPro" id="IPR006463">
    <property type="entry name" value="MiaB_methiolase"/>
</dbReference>
<dbReference type="InterPro" id="IPR007197">
    <property type="entry name" value="rSAM"/>
</dbReference>
<dbReference type="InterPro" id="IPR023404">
    <property type="entry name" value="rSAM_horseshoe"/>
</dbReference>
<dbReference type="InterPro" id="IPR002792">
    <property type="entry name" value="TRAM_dom"/>
</dbReference>
<dbReference type="NCBIfam" id="TIGR01574">
    <property type="entry name" value="miaB-methiolase"/>
    <property type="match status" value="1"/>
</dbReference>
<dbReference type="NCBIfam" id="TIGR00089">
    <property type="entry name" value="MiaB/RimO family radical SAM methylthiotransferase"/>
    <property type="match status" value="1"/>
</dbReference>
<dbReference type="PANTHER" id="PTHR43020">
    <property type="entry name" value="CDK5 REGULATORY SUBUNIT-ASSOCIATED PROTEIN 1"/>
    <property type="match status" value="1"/>
</dbReference>
<dbReference type="PANTHER" id="PTHR43020:SF2">
    <property type="entry name" value="MITOCHONDRIAL TRNA METHYLTHIOTRANSFERASE CDK5RAP1"/>
    <property type="match status" value="1"/>
</dbReference>
<dbReference type="Pfam" id="PF04055">
    <property type="entry name" value="Radical_SAM"/>
    <property type="match status" value="1"/>
</dbReference>
<dbReference type="Pfam" id="PF01938">
    <property type="entry name" value="TRAM"/>
    <property type="match status" value="1"/>
</dbReference>
<dbReference type="Pfam" id="PF00919">
    <property type="entry name" value="UPF0004"/>
    <property type="match status" value="1"/>
</dbReference>
<dbReference type="SFLD" id="SFLDF00273">
    <property type="entry name" value="(dimethylallyl)adenosine_tRNA"/>
    <property type="match status" value="1"/>
</dbReference>
<dbReference type="SFLD" id="SFLDG01082">
    <property type="entry name" value="B12-binding_domain_containing"/>
    <property type="match status" value="1"/>
</dbReference>
<dbReference type="SFLD" id="SFLDS00029">
    <property type="entry name" value="Radical_SAM"/>
    <property type="match status" value="1"/>
</dbReference>
<dbReference type="SMART" id="SM00729">
    <property type="entry name" value="Elp3"/>
    <property type="match status" value="1"/>
</dbReference>
<dbReference type="SUPFAM" id="SSF102114">
    <property type="entry name" value="Radical SAM enzymes"/>
    <property type="match status" value="1"/>
</dbReference>
<dbReference type="PROSITE" id="PS51449">
    <property type="entry name" value="MTTASE_N"/>
    <property type="match status" value="1"/>
</dbReference>
<dbReference type="PROSITE" id="PS01278">
    <property type="entry name" value="MTTASE_RADICAL"/>
    <property type="match status" value="1"/>
</dbReference>
<dbReference type="PROSITE" id="PS51918">
    <property type="entry name" value="RADICAL_SAM"/>
    <property type="match status" value="1"/>
</dbReference>
<dbReference type="PROSITE" id="PS50926">
    <property type="entry name" value="TRAM"/>
    <property type="match status" value="1"/>
</dbReference>
<protein>
    <recommendedName>
        <fullName evidence="1">tRNA-2-methylthio-N(6)-dimethylallyladenosine synthase</fullName>
        <ecNumber evidence="1">2.8.4.3</ecNumber>
    </recommendedName>
    <alternativeName>
        <fullName evidence="1">(Dimethylallyl)adenosine tRNA methylthiotransferase MiaB</fullName>
    </alternativeName>
    <alternativeName>
        <fullName evidence="1">tRNA-i(6)A37 methylthiotransferase</fullName>
    </alternativeName>
</protein>
<keyword id="KW-0004">4Fe-4S</keyword>
<keyword id="KW-0963">Cytoplasm</keyword>
<keyword id="KW-0408">Iron</keyword>
<keyword id="KW-0411">Iron-sulfur</keyword>
<keyword id="KW-0479">Metal-binding</keyword>
<keyword id="KW-0949">S-adenosyl-L-methionine</keyword>
<keyword id="KW-0808">Transferase</keyword>
<keyword id="KW-0819">tRNA processing</keyword>
<feature type="chain" id="PRO_0000374330" description="tRNA-2-methylthio-N(6)-dimethylallyladenosine synthase">
    <location>
        <begin position="1"/>
        <end position="474"/>
    </location>
</feature>
<feature type="domain" description="MTTase N-terminal" evidence="1">
    <location>
        <begin position="3"/>
        <end position="120"/>
    </location>
</feature>
<feature type="domain" description="Radical SAM core" evidence="2">
    <location>
        <begin position="143"/>
        <end position="375"/>
    </location>
</feature>
<feature type="domain" description="TRAM" evidence="1">
    <location>
        <begin position="378"/>
        <end position="441"/>
    </location>
</feature>
<feature type="binding site" evidence="1">
    <location>
        <position position="12"/>
    </location>
    <ligand>
        <name>[4Fe-4S] cluster</name>
        <dbReference type="ChEBI" id="CHEBI:49883"/>
        <label>1</label>
    </ligand>
</feature>
<feature type="binding site" evidence="1">
    <location>
        <position position="49"/>
    </location>
    <ligand>
        <name>[4Fe-4S] cluster</name>
        <dbReference type="ChEBI" id="CHEBI:49883"/>
        <label>1</label>
    </ligand>
</feature>
<feature type="binding site" evidence="1">
    <location>
        <position position="83"/>
    </location>
    <ligand>
        <name>[4Fe-4S] cluster</name>
        <dbReference type="ChEBI" id="CHEBI:49883"/>
        <label>1</label>
    </ligand>
</feature>
<feature type="binding site" evidence="1">
    <location>
        <position position="157"/>
    </location>
    <ligand>
        <name>[4Fe-4S] cluster</name>
        <dbReference type="ChEBI" id="CHEBI:49883"/>
        <label>2</label>
        <note>4Fe-4S-S-AdoMet</note>
    </ligand>
</feature>
<feature type="binding site" evidence="1">
    <location>
        <position position="161"/>
    </location>
    <ligand>
        <name>[4Fe-4S] cluster</name>
        <dbReference type="ChEBI" id="CHEBI:49883"/>
        <label>2</label>
        <note>4Fe-4S-S-AdoMet</note>
    </ligand>
</feature>
<feature type="binding site" evidence="1">
    <location>
        <position position="164"/>
    </location>
    <ligand>
        <name>[4Fe-4S] cluster</name>
        <dbReference type="ChEBI" id="CHEBI:49883"/>
        <label>2</label>
        <note>4Fe-4S-S-AdoMet</note>
    </ligand>
</feature>
<comment type="function">
    <text evidence="1">Catalyzes the methylthiolation of N6-(dimethylallyl)adenosine (i(6)A), leading to the formation of 2-methylthio-N6-(dimethylallyl)adenosine (ms(2)i(6)A) at position 37 in tRNAs that read codons beginning with uridine.</text>
</comment>
<comment type="catalytic activity">
    <reaction evidence="1">
        <text>N(6)-dimethylallyladenosine(37) in tRNA + (sulfur carrier)-SH + AH2 + 2 S-adenosyl-L-methionine = 2-methylsulfanyl-N(6)-dimethylallyladenosine(37) in tRNA + (sulfur carrier)-H + 5'-deoxyadenosine + L-methionine + A + S-adenosyl-L-homocysteine + 2 H(+)</text>
        <dbReference type="Rhea" id="RHEA:37067"/>
        <dbReference type="Rhea" id="RHEA-COMP:10375"/>
        <dbReference type="Rhea" id="RHEA-COMP:10376"/>
        <dbReference type="Rhea" id="RHEA-COMP:14737"/>
        <dbReference type="Rhea" id="RHEA-COMP:14739"/>
        <dbReference type="ChEBI" id="CHEBI:13193"/>
        <dbReference type="ChEBI" id="CHEBI:15378"/>
        <dbReference type="ChEBI" id="CHEBI:17319"/>
        <dbReference type="ChEBI" id="CHEBI:17499"/>
        <dbReference type="ChEBI" id="CHEBI:29917"/>
        <dbReference type="ChEBI" id="CHEBI:57844"/>
        <dbReference type="ChEBI" id="CHEBI:57856"/>
        <dbReference type="ChEBI" id="CHEBI:59789"/>
        <dbReference type="ChEBI" id="CHEBI:64428"/>
        <dbReference type="ChEBI" id="CHEBI:74415"/>
        <dbReference type="ChEBI" id="CHEBI:74417"/>
        <dbReference type="EC" id="2.8.4.3"/>
    </reaction>
</comment>
<comment type="cofactor">
    <cofactor evidence="1">
        <name>[4Fe-4S] cluster</name>
        <dbReference type="ChEBI" id="CHEBI:49883"/>
    </cofactor>
    <text evidence="1">Binds 2 [4Fe-4S] clusters. One cluster is coordinated with 3 cysteines and an exchangeable S-adenosyl-L-methionine.</text>
</comment>
<comment type="subunit">
    <text evidence="1">Monomer.</text>
</comment>
<comment type="subcellular location">
    <subcellularLocation>
        <location evidence="1">Cytoplasm</location>
    </subcellularLocation>
</comment>
<comment type="similarity">
    <text evidence="1">Belongs to the methylthiotransferase family. MiaB subfamily.</text>
</comment>
<name>MIAB_HAEIG</name>
<gene>
    <name evidence="1" type="primary">miaB</name>
    <name type="ordered locus">CGSHiGG_02565</name>
</gene>